<organism>
    <name type="scientific">Danio rerio</name>
    <name type="common">Zebrafish</name>
    <name type="synonym">Brachydanio rerio</name>
    <dbReference type="NCBI Taxonomy" id="7955"/>
    <lineage>
        <taxon>Eukaryota</taxon>
        <taxon>Metazoa</taxon>
        <taxon>Chordata</taxon>
        <taxon>Craniata</taxon>
        <taxon>Vertebrata</taxon>
        <taxon>Euteleostomi</taxon>
        <taxon>Actinopterygii</taxon>
        <taxon>Neopterygii</taxon>
        <taxon>Teleostei</taxon>
        <taxon>Ostariophysi</taxon>
        <taxon>Cypriniformes</taxon>
        <taxon>Danionidae</taxon>
        <taxon>Danioninae</taxon>
        <taxon>Danio</taxon>
    </lineage>
</organism>
<gene>
    <name type="primary">glra2</name>
</gene>
<reference key="1">
    <citation type="journal article" date="2013" name="Nature">
        <title>The zebrafish reference genome sequence and its relationship to the human genome.</title>
        <authorList>
            <person name="Howe K."/>
            <person name="Clark M.D."/>
            <person name="Torroja C.F."/>
            <person name="Torrance J."/>
            <person name="Berthelot C."/>
            <person name="Muffato M."/>
            <person name="Collins J.E."/>
            <person name="Humphray S."/>
            <person name="McLaren K."/>
            <person name="Matthews L."/>
            <person name="McLaren S."/>
            <person name="Sealy I."/>
            <person name="Caccamo M."/>
            <person name="Churcher C."/>
            <person name="Scott C."/>
            <person name="Barrett J.C."/>
            <person name="Koch R."/>
            <person name="Rauch G.J."/>
            <person name="White S."/>
            <person name="Chow W."/>
            <person name="Kilian B."/>
            <person name="Quintais L.T."/>
            <person name="Guerra-Assuncao J.A."/>
            <person name="Zhou Y."/>
            <person name="Gu Y."/>
            <person name="Yen J."/>
            <person name="Vogel J.H."/>
            <person name="Eyre T."/>
            <person name="Redmond S."/>
            <person name="Banerjee R."/>
            <person name="Chi J."/>
            <person name="Fu B."/>
            <person name="Langley E."/>
            <person name="Maguire S.F."/>
            <person name="Laird G.K."/>
            <person name="Lloyd D."/>
            <person name="Kenyon E."/>
            <person name="Donaldson S."/>
            <person name="Sehra H."/>
            <person name="Almeida-King J."/>
            <person name="Loveland J."/>
            <person name="Trevanion S."/>
            <person name="Jones M."/>
            <person name="Quail M."/>
            <person name="Willey D."/>
            <person name="Hunt A."/>
            <person name="Burton J."/>
            <person name="Sims S."/>
            <person name="McLay K."/>
            <person name="Plumb B."/>
            <person name="Davis J."/>
            <person name="Clee C."/>
            <person name="Oliver K."/>
            <person name="Clark R."/>
            <person name="Riddle C."/>
            <person name="Elliot D."/>
            <person name="Threadgold G."/>
            <person name="Harden G."/>
            <person name="Ware D."/>
            <person name="Begum S."/>
            <person name="Mortimore B."/>
            <person name="Kerry G."/>
            <person name="Heath P."/>
            <person name="Phillimore B."/>
            <person name="Tracey A."/>
            <person name="Corby N."/>
            <person name="Dunn M."/>
            <person name="Johnson C."/>
            <person name="Wood J."/>
            <person name="Clark S."/>
            <person name="Pelan S."/>
            <person name="Griffiths G."/>
            <person name="Smith M."/>
            <person name="Glithero R."/>
            <person name="Howden P."/>
            <person name="Barker N."/>
            <person name="Lloyd C."/>
            <person name="Stevens C."/>
            <person name="Harley J."/>
            <person name="Holt K."/>
            <person name="Panagiotidis G."/>
            <person name="Lovell J."/>
            <person name="Beasley H."/>
            <person name="Henderson C."/>
            <person name="Gordon D."/>
            <person name="Auger K."/>
            <person name="Wright D."/>
            <person name="Collins J."/>
            <person name="Raisen C."/>
            <person name="Dyer L."/>
            <person name="Leung K."/>
            <person name="Robertson L."/>
            <person name="Ambridge K."/>
            <person name="Leongamornlert D."/>
            <person name="McGuire S."/>
            <person name="Gilderthorp R."/>
            <person name="Griffiths C."/>
            <person name="Manthravadi D."/>
            <person name="Nichol S."/>
            <person name="Barker G."/>
            <person name="Whitehead S."/>
            <person name="Kay M."/>
            <person name="Brown J."/>
            <person name="Murnane C."/>
            <person name="Gray E."/>
            <person name="Humphries M."/>
            <person name="Sycamore N."/>
            <person name="Barker D."/>
            <person name="Saunders D."/>
            <person name="Wallis J."/>
            <person name="Babbage A."/>
            <person name="Hammond S."/>
            <person name="Mashreghi-Mohammadi M."/>
            <person name="Barr L."/>
            <person name="Martin S."/>
            <person name="Wray P."/>
            <person name="Ellington A."/>
            <person name="Matthews N."/>
            <person name="Ellwood M."/>
            <person name="Woodmansey R."/>
            <person name="Clark G."/>
            <person name="Cooper J."/>
            <person name="Tromans A."/>
            <person name="Grafham D."/>
            <person name="Skuce C."/>
            <person name="Pandian R."/>
            <person name="Andrews R."/>
            <person name="Harrison E."/>
            <person name="Kimberley A."/>
            <person name="Garnett J."/>
            <person name="Fosker N."/>
            <person name="Hall R."/>
            <person name="Garner P."/>
            <person name="Kelly D."/>
            <person name="Bird C."/>
            <person name="Palmer S."/>
            <person name="Gehring I."/>
            <person name="Berger A."/>
            <person name="Dooley C.M."/>
            <person name="Ersan-Urun Z."/>
            <person name="Eser C."/>
            <person name="Geiger H."/>
            <person name="Geisler M."/>
            <person name="Karotki L."/>
            <person name="Kirn A."/>
            <person name="Konantz J."/>
            <person name="Konantz M."/>
            <person name="Oberlander M."/>
            <person name="Rudolph-Geiger S."/>
            <person name="Teucke M."/>
            <person name="Lanz C."/>
            <person name="Raddatz G."/>
            <person name="Osoegawa K."/>
            <person name="Zhu B."/>
            <person name="Rapp A."/>
            <person name="Widaa S."/>
            <person name="Langford C."/>
            <person name="Yang F."/>
            <person name="Schuster S.C."/>
            <person name="Carter N.P."/>
            <person name="Harrow J."/>
            <person name="Ning Z."/>
            <person name="Herrero J."/>
            <person name="Searle S.M."/>
            <person name="Enright A."/>
            <person name="Geisler R."/>
            <person name="Plasterk R.H."/>
            <person name="Lee C."/>
            <person name="Westerfield M."/>
            <person name="de Jong P.J."/>
            <person name="Zon L.I."/>
            <person name="Postlethwait J.H."/>
            <person name="Nusslein-Volhard C."/>
            <person name="Hubbard T.J."/>
            <person name="Roest Crollius H."/>
            <person name="Rogers J."/>
            <person name="Stemple D.L."/>
        </authorList>
    </citation>
    <scope>NUCLEOTIDE SEQUENCE [LARGE SCALE GENOMIC DNA]</scope>
    <source>
        <strain>Tuebingen</strain>
    </source>
</reference>
<reference key="2">
    <citation type="journal article" date="2016" name="Mol. Psychiatry">
        <title>Genetic and functional analyses demonstrate a role for abnormal glycinergic signaling in autism.</title>
        <authorList>
            <person name="Pilorge M."/>
            <person name="Fassier C."/>
            <person name="Le Corronc H."/>
            <person name="Potey A."/>
            <person name="Bai J."/>
            <person name="De Gois S."/>
            <person name="Delaby E."/>
            <person name="Assouline B."/>
            <person name="Guinchat V."/>
            <person name="Devillard F."/>
            <person name="Delorme R."/>
            <person name="Nygren G."/>
            <person name="Raastam M."/>
            <person name="Meier J.C."/>
            <person name="Otani S."/>
            <person name="Cheval H."/>
            <person name="James V.M."/>
            <person name="Topf M."/>
            <person name="Dear T.N."/>
            <person name="Gillberg C."/>
            <person name="Leboyer M."/>
            <person name="Giros B."/>
            <person name="Gautron S."/>
            <person name="Hazan J."/>
            <person name="Harvey R.J."/>
            <person name="Legendre P."/>
            <person name="Betancur C."/>
        </authorList>
    </citation>
    <scope>DISRUPTION PHENOTYPE</scope>
</reference>
<feature type="signal peptide" evidence="4">
    <location>
        <begin position="1"/>
        <end position="27"/>
    </location>
</feature>
<feature type="chain" id="PRO_5022253906" description="Glycine receptor subunit alpha-2">
    <location>
        <begin position="28"/>
        <end position="449"/>
    </location>
</feature>
<feature type="topological domain" description="Extracellular" evidence="1">
    <location>
        <begin position="28"/>
        <end position="255"/>
    </location>
</feature>
<feature type="transmembrane region" description="Helical; Name=1" evidence="4">
    <location>
        <begin position="256"/>
        <end position="276"/>
    </location>
</feature>
<feature type="topological domain" description="Cytoplasmic" evidence="1">
    <location>
        <begin position="277"/>
        <end position="282"/>
    </location>
</feature>
<feature type="transmembrane region" description="Helical; Name=2" evidence="4">
    <location>
        <begin position="283"/>
        <end position="302"/>
    </location>
</feature>
<feature type="topological domain" description="Extracellular" evidence="1">
    <location>
        <begin position="303"/>
        <end position="313"/>
    </location>
</feature>
<feature type="transmembrane region" description="Helical; Name=3" evidence="4">
    <location>
        <begin position="314"/>
        <end position="334"/>
    </location>
</feature>
<feature type="topological domain" description="Cytoplasmic" evidence="1">
    <location>
        <begin position="335"/>
        <end position="420"/>
    </location>
</feature>
<feature type="transmembrane region" description="Helical; Name=4" evidence="4">
    <location>
        <begin position="421"/>
        <end position="441"/>
    </location>
</feature>
<feature type="topological domain" description="Extracellular" evidence="1">
    <location>
        <begin position="442"/>
        <end position="449"/>
    </location>
</feature>
<feature type="binding site" description="in one chain" evidence="2">
    <location>
        <position position="97"/>
    </location>
    <ligand>
        <name>glycine</name>
        <dbReference type="ChEBI" id="CHEBI:57305"/>
        <label>1</label>
        <note>agonist; ligand shared between two adjacent GLRA2 subunits</note>
    </ligand>
</feature>
<feature type="binding site" evidence="2">
    <location>
        <position position="97"/>
    </location>
    <ligand>
        <name>glycine</name>
        <dbReference type="ChEBI" id="CHEBI:57305"/>
        <label>2</label>
        <note>agonist; ligand shared with an adjacent GLRB subunit</note>
    </ligand>
</feature>
<feature type="binding site" evidence="2">
    <location>
        <position position="97"/>
    </location>
    <ligand>
        <name>strychnine</name>
        <dbReference type="ChEBI" id="CHEBI:90700"/>
        <note>antagonist</note>
    </ligand>
</feature>
<feature type="binding site" description="in one chain" evidence="2">
    <location>
        <position position="161"/>
    </location>
    <ligand>
        <name>glycine</name>
        <dbReference type="ChEBI" id="CHEBI:57305"/>
        <label>1</label>
        <note>agonist; ligand shared between two adjacent GLRA2 subunits</note>
    </ligand>
</feature>
<feature type="binding site" evidence="2">
    <location>
        <position position="161"/>
    </location>
    <ligand>
        <name>glycine</name>
        <dbReference type="ChEBI" id="CHEBI:57305"/>
        <label>2</label>
        <note>agonist; ligand shared with an adjacent GLRB subunit</note>
    </ligand>
</feature>
<feature type="binding site" evidence="1">
    <location>
        <position position="224"/>
    </location>
    <ligand>
        <name>Zn(2+)</name>
        <dbReference type="ChEBI" id="CHEBI:29105"/>
    </ligand>
</feature>
<feature type="binding site" evidence="1">
    <location>
        <position position="226"/>
    </location>
    <ligand>
        <name>Zn(2+)</name>
        <dbReference type="ChEBI" id="CHEBI:29105"/>
    </ligand>
</feature>
<feature type="binding site" description="in other chain" evidence="2">
    <location>
        <position position="236"/>
    </location>
    <ligand>
        <name>glycine</name>
        <dbReference type="ChEBI" id="CHEBI:57305"/>
        <label>1</label>
        <note>agonist; ligand shared between two adjacent GLRA2 subunits</note>
    </ligand>
</feature>
<feature type="binding site" evidence="2">
    <location>
        <position position="236"/>
    </location>
    <ligand>
        <name>glycine</name>
        <dbReference type="ChEBI" id="CHEBI:57305"/>
        <label>3</label>
        <note>agonist; ligand shared with an adjacent GLRB subunit</note>
    </ligand>
</feature>
<feature type="binding site" evidence="1">
    <location>
        <position position="247"/>
    </location>
    <ligand>
        <name>Zn(2+)</name>
        <dbReference type="ChEBI" id="CHEBI:29105"/>
    </ligand>
</feature>
<feature type="site" description="Important for obstruction of the ion pore in the closed conformation" evidence="1">
    <location>
        <position position="293"/>
    </location>
</feature>
<feature type="glycosylation site" description="N-linked (GlcNAc...) asparagine" evidence="4">
    <location>
        <position position="70"/>
    </location>
</feature>
<feature type="disulfide bond" evidence="1">
    <location>
        <begin position="170"/>
        <end position="184"/>
    </location>
</feature>
<feature type="disulfide bond" evidence="1">
    <location>
        <begin position="230"/>
        <end position="241"/>
    </location>
</feature>
<sequence length="449" mass="51569">MTRPSVKLLTTLLACLMEMLNFRVSSGKDPDLLSSSSSSMSPSDFLDKLMGRTSGYDARIRPNFKGPPVNVTCNIFINSFGSVTETTMDYRVNIFLRQKWNDPRLAYSEYPDSSLDLDPSMLDSIWKPDLFFANEKGANFHDVTTDNKLLRIFKDGTVLYSIRLTLILSCPMDLKNFPMDVQTCTMQLESFGYTMNDLIFEWLDKGPVQVADGLTLPQFLIRDEKDLGYCTKHYNTGKFTCIEVKFHLERQMGYYLIQMYIPSLLIVILSWVSFWINMDAAPARVALGITTVLTMTTQSSGSRASLPKVSYVKAIDIWMAVCLLFVFAALLEYAGVNFVSRQQKEFLRLKRRQRRTQKEEDLQDGRLHFSSYNTTTCVKDGAVVKNTQVNQIQQPSILKNTETNRKKFVDRAKRIDTISRAAFPLAFLIFNVFYWITYKIIRHESARKD</sequence>
<dbReference type="EMBL" id="AL732610">
    <property type="status" value="NOT_ANNOTATED_CDS"/>
    <property type="molecule type" value="Genomic_DNA"/>
</dbReference>
<dbReference type="EMBL" id="CABZ01005747">
    <property type="status" value="NOT_ANNOTATED_CDS"/>
    <property type="molecule type" value="Genomic_DNA"/>
</dbReference>
<dbReference type="EMBL" id="CABZ01068154">
    <property type="status" value="NOT_ANNOTATED_CDS"/>
    <property type="molecule type" value="Genomic_DNA"/>
</dbReference>
<dbReference type="EMBL" id="CABZ01068155">
    <property type="status" value="NOT_ANNOTATED_CDS"/>
    <property type="molecule type" value="Genomic_DNA"/>
</dbReference>
<dbReference type="EMBL" id="CABZ01068156">
    <property type="status" value="NOT_ANNOTATED_CDS"/>
    <property type="molecule type" value="Genomic_DNA"/>
</dbReference>
<dbReference type="EMBL" id="CABZ01068157">
    <property type="status" value="NOT_ANNOTATED_CDS"/>
    <property type="molecule type" value="Genomic_DNA"/>
</dbReference>
<dbReference type="EMBL" id="CABZ01068158">
    <property type="status" value="NOT_ANNOTATED_CDS"/>
    <property type="molecule type" value="Genomic_DNA"/>
</dbReference>
<dbReference type="SMR" id="F1R8P4"/>
<dbReference type="FunCoup" id="F1R8P4">
    <property type="interactions" value="35"/>
</dbReference>
<dbReference type="STRING" id="7955.ENSDARP00000096397"/>
<dbReference type="Ensembl" id="ENSDART00000105620">
    <property type="protein sequence ID" value="ENSDARP00000096397"/>
    <property type="gene ID" value="ENSDARG00000075012"/>
</dbReference>
<dbReference type="HOGENOM" id="CLU_010920_1_4_1"/>
<dbReference type="InParanoid" id="F1R8P4"/>
<dbReference type="OMA" id="CELHMQP"/>
<dbReference type="Reactome" id="R-DRE-112314">
    <property type="pathway name" value="Neurotransmitter receptors and postsynaptic signal transmission"/>
</dbReference>
<dbReference type="Proteomes" id="UP000000437">
    <property type="component" value="Unplaced"/>
</dbReference>
<dbReference type="Bgee" id="ENSDARG00000075012">
    <property type="expression patterns" value="Expressed in retina and 11 other cell types or tissues"/>
</dbReference>
<dbReference type="ExpressionAtlas" id="F1R8P4">
    <property type="expression patterns" value="baseline"/>
</dbReference>
<dbReference type="GO" id="GO:0042995">
    <property type="term" value="C:cell projection"/>
    <property type="evidence" value="ECO:0007669"/>
    <property type="project" value="UniProtKB-SubCell"/>
</dbReference>
<dbReference type="GO" id="GO:0034707">
    <property type="term" value="C:chloride channel complex"/>
    <property type="evidence" value="ECO:0007669"/>
    <property type="project" value="UniProtKB-KW"/>
</dbReference>
<dbReference type="GO" id="GO:0045211">
    <property type="term" value="C:postsynaptic membrane"/>
    <property type="evidence" value="ECO:0007669"/>
    <property type="project" value="UniProtKB-SubCell"/>
</dbReference>
<dbReference type="GO" id="GO:0005254">
    <property type="term" value="F:chloride channel activity"/>
    <property type="evidence" value="ECO:0007669"/>
    <property type="project" value="UniProtKB-KW"/>
</dbReference>
<dbReference type="GO" id="GO:0016594">
    <property type="term" value="F:glycine binding"/>
    <property type="evidence" value="ECO:0007669"/>
    <property type="project" value="InterPro"/>
</dbReference>
<dbReference type="GO" id="GO:0046872">
    <property type="term" value="F:metal ion binding"/>
    <property type="evidence" value="ECO:0007669"/>
    <property type="project" value="UniProtKB-KW"/>
</dbReference>
<dbReference type="GO" id="GO:0004888">
    <property type="term" value="F:transmembrane signaling receptor activity"/>
    <property type="evidence" value="ECO:0007669"/>
    <property type="project" value="InterPro"/>
</dbReference>
<dbReference type="GO" id="GO:0022824">
    <property type="term" value="F:transmitter-gated monoatomic ion channel activity"/>
    <property type="evidence" value="ECO:0007669"/>
    <property type="project" value="InterPro"/>
</dbReference>
<dbReference type="CDD" id="cd19009">
    <property type="entry name" value="LGIC_ECD_GlyR_alpha"/>
    <property type="match status" value="1"/>
</dbReference>
<dbReference type="CDD" id="cd19060">
    <property type="entry name" value="LGIC_TM_GlyR_alpha"/>
    <property type="match status" value="1"/>
</dbReference>
<dbReference type="FunFam" id="2.70.170.10:FF:000002">
    <property type="entry name" value="Glycine receptor alpha 1 subunit"/>
    <property type="match status" value="1"/>
</dbReference>
<dbReference type="FunFam" id="1.20.58.390:FF:000003">
    <property type="entry name" value="Glycine receptor alpha 2 subunit"/>
    <property type="match status" value="1"/>
</dbReference>
<dbReference type="Gene3D" id="2.70.170.10">
    <property type="entry name" value="Neurotransmitter-gated ion-channel ligand-binding domain"/>
    <property type="match status" value="1"/>
</dbReference>
<dbReference type="Gene3D" id="1.20.58.390">
    <property type="entry name" value="Neurotransmitter-gated ion-channel transmembrane domain"/>
    <property type="match status" value="1"/>
</dbReference>
<dbReference type="InterPro" id="IPR006028">
    <property type="entry name" value="GABAA/Glycine_rcpt"/>
</dbReference>
<dbReference type="InterPro" id="IPR008127">
    <property type="entry name" value="Glycine_rcpt_A"/>
</dbReference>
<dbReference type="InterPro" id="IPR006202">
    <property type="entry name" value="Neur_chan_lig-bd"/>
</dbReference>
<dbReference type="InterPro" id="IPR036734">
    <property type="entry name" value="Neur_chan_lig-bd_sf"/>
</dbReference>
<dbReference type="InterPro" id="IPR006201">
    <property type="entry name" value="Neur_channel"/>
</dbReference>
<dbReference type="InterPro" id="IPR036719">
    <property type="entry name" value="Neuro-gated_channel_TM_sf"/>
</dbReference>
<dbReference type="InterPro" id="IPR038050">
    <property type="entry name" value="Neuro_actylchol_rec"/>
</dbReference>
<dbReference type="InterPro" id="IPR006029">
    <property type="entry name" value="Neurotrans-gated_channel_TM"/>
</dbReference>
<dbReference type="InterPro" id="IPR018000">
    <property type="entry name" value="Neurotransmitter_ion_chnl_CS"/>
</dbReference>
<dbReference type="NCBIfam" id="TIGR00860">
    <property type="entry name" value="LIC"/>
    <property type="match status" value="1"/>
</dbReference>
<dbReference type="PANTHER" id="PTHR18945">
    <property type="entry name" value="NEUROTRANSMITTER GATED ION CHANNEL"/>
    <property type="match status" value="1"/>
</dbReference>
<dbReference type="Pfam" id="PF02931">
    <property type="entry name" value="Neur_chan_LBD"/>
    <property type="match status" value="1"/>
</dbReference>
<dbReference type="Pfam" id="PF02932">
    <property type="entry name" value="Neur_chan_memb"/>
    <property type="match status" value="1"/>
</dbReference>
<dbReference type="PRINTS" id="PR00253">
    <property type="entry name" value="GABAARECEPTR"/>
</dbReference>
<dbReference type="PRINTS" id="PR01673">
    <property type="entry name" value="GLYRALPHA"/>
</dbReference>
<dbReference type="PRINTS" id="PR00252">
    <property type="entry name" value="NRIONCHANNEL"/>
</dbReference>
<dbReference type="SUPFAM" id="SSF90112">
    <property type="entry name" value="Neurotransmitter-gated ion-channel transmembrane pore"/>
    <property type="match status" value="1"/>
</dbReference>
<dbReference type="SUPFAM" id="SSF63712">
    <property type="entry name" value="Nicotinic receptor ligand binding domain-like"/>
    <property type="match status" value="1"/>
</dbReference>
<dbReference type="PROSITE" id="PS00236">
    <property type="entry name" value="NEUROTR_ION_CHANNEL"/>
    <property type="match status" value="1"/>
</dbReference>
<name>GLRA2_DANRE</name>
<proteinExistence type="inferred from homology"/>
<evidence type="ECO:0000250" key="1">
    <source>
        <dbReference type="UniProtKB" id="P23415"/>
    </source>
</evidence>
<evidence type="ECO:0000250" key="2">
    <source>
        <dbReference type="UniProtKB" id="P23416"/>
    </source>
</evidence>
<evidence type="ECO:0000250" key="3">
    <source>
        <dbReference type="UniProtKB" id="Q7TNC8"/>
    </source>
</evidence>
<evidence type="ECO:0000255" key="4"/>
<evidence type="ECO:0000255" key="5">
    <source>
        <dbReference type="RuleBase" id="RU000687"/>
    </source>
</evidence>
<evidence type="ECO:0000269" key="6">
    <source>
    </source>
</evidence>
<evidence type="ECO:0000305" key="7">
    <source>
    </source>
</evidence>
<protein>
    <recommendedName>
        <fullName evidence="7">Glycine receptor subunit alpha-2</fullName>
    </recommendedName>
</protein>
<accession>F1R8P4</accession>
<comment type="function">
    <text evidence="2 3">Subunit of heteromeric glycine-gated chloride channels (By similarity). Plays a role in synaptic plasticity (By similarity). Contributes to the generation of inhibitory postsynaptic currents, and is involved in the down-regulation of neuronal excitability.</text>
</comment>
<comment type="catalytic activity">
    <reaction evidence="2">
        <text>chloride(in) = chloride(out)</text>
        <dbReference type="Rhea" id="RHEA:29823"/>
        <dbReference type="ChEBI" id="CHEBI:17996"/>
    </reaction>
</comment>
<comment type="activity regulation">
    <text evidence="2">Channel opening is triggered by extracellular glycine. Channel opening is also triggered by taurine and beta-alanine. Inhibited by strychnine.</text>
</comment>
<comment type="subcellular location">
    <subcellularLocation>
        <location evidence="3">Postsynaptic cell membrane</location>
        <topology evidence="1">Multi-pass membrane protein</topology>
    </subcellularLocation>
    <subcellularLocation>
        <location evidence="3">Synapse</location>
    </subcellularLocation>
    <subcellularLocation>
        <location evidence="2">Cell membrane</location>
        <topology evidence="1">Multi-pass membrane protein</topology>
    </subcellularLocation>
    <subcellularLocation>
        <location evidence="3">Cell projection</location>
    </subcellularLocation>
</comment>
<comment type="disruption phenotype">
    <text evidence="6">GLRA2 morpholino knockdown leads to axon hyperbranching of spinal motor neurons at 24 hpf.</text>
</comment>
<comment type="miscellaneous">
    <text evidence="2">The alpha subunit binds strychnine.</text>
</comment>
<comment type="similarity">
    <text evidence="5">Belongs to the ligand-gated ion channel (TC 1.A.9) family.</text>
</comment>
<keyword id="KW-1003">Cell membrane</keyword>
<keyword id="KW-0966">Cell projection</keyword>
<keyword id="KW-0868">Chloride</keyword>
<keyword id="KW-0869">Chloride channel</keyword>
<keyword id="KW-1015">Disulfide bond</keyword>
<keyword id="KW-0325">Glycoprotein</keyword>
<keyword id="KW-0407">Ion channel</keyword>
<keyword id="KW-0406">Ion transport</keyword>
<keyword id="KW-1071">Ligand-gated ion channel</keyword>
<keyword id="KW-0472">Membrane</keyword>
<keyword id="KW-0479">Metal-binding</keyword>
<keyword id="KW-0628">Postsynaptic cell membrane</keyword>
<keyword id="KW-0675">Receptor</keyword>
<keyword id="KW-1185">Reference proteome</keyword>
<keyword id="KW-0732">Signal</keyword>
<keyword id="KW-0770">Synapse</keyword>
<keyword id="KW-0812">Transmembrane</keyword>
<keyword id="KW-1133">Transmembrane helix</keyword>
<keyword id="KW-0813">Transport</keyword>
<keyword id="KW-0862">Zinc</keyword>